<comment type="function">
    <text evidence="1">Protein S19 forms a complex with S13 that binds strongly to the 16S ribosomal RNA.</text>
</comment>
<comment type="similarity">
    <text evidence="1">Belongs to the universal ribosomal protein uS19 family.</text>
</comment>
<dbReference type="EMBL" id="CP001615">
    <property type="protein sequence ID" value="ACQ70555.1"/>
    <property type="molecule type" value="Genomic_DNA"/>
</dbReference>
<dbReference type="RefSeq" id="WP_012727673.1">
    <property type="nucleotide sequence ID" value="NZ_MOEL01000001.1"/>
</dbReference>
<dbReference type="SMR" id="C4KZP2"/>
<dbReference type="STRING" id="360911.EAT1b_1629"/>
<dbReference type="GeneID" id="94370747"/>
<dbReference type="KEGG" id="eat:EAT1b_1629"/>
<dbReference type="eggNOG" id="COG0185">
    <property type="taxonomic scope" value="Bacteria"/>
</dbReference>
<dbReference type="HOGENOM" id="CLU_144911_0_1_9"/>
<dbReference type="OrthoDB" id="9797833at2"/>
<dbReference type="Proteomes" id="UP000000716">
    <property type="component" value="Chromosome"/>
</dbReference>
<dbReference type="GO" id="GO:0005737">
    <property type="term" value="C:cytoplasm"/>
    <property type="evidence" value="ECO:0007669"/>
    <property type="project" value="UniProtKB-ARBA"/>
</dbReference>
<dbReference type="GO" id="GO:0015935">
    <property type="term" value="C:small ribosomal subunit"/>
    <property type="evidence" value="ECO:0007669"/>
    <property type="project" value="InterPro"/>
</dbReference>
<dbReference type="GO" id="GO:0019843">
    <property type="term" value="F:rRNA binding"/>
    <property type="evidence" value="ECO:0007669"/>
    <property type="project" value="UniProtKB-UniRule"/>
</dbReference>
<dbReference type="GO" id="GO:0003735">
    <property type="term" value="F:structural constituent of ribosome"/>
    <property type="evidence" value="ECO:0007669"/>
    <property type="project" value="InterPro"/>
</dbReference>
<dbReference type="GO" id="GO:0000028">
    <property type="term" value="P:ribosomal small subunit assembly"/>
    <property type="evidence" value="ECO:0007669"/>
    <property type="project" value="TreeGrafter"/>
</dbReference>
<dbReference type="GO" id="GO:0006412">
    <property type="term" value="P:translation"/>
    <property type="evidence" value="ECO:0007669"/>
    <property type="project" value="UniProtKB-UniRule"/>
</dbReference>
<dbReference type="FunFam" id="3.30.860.10:FF:000001">
    <property type="entry name" value="30S ribosomal protein S19"/>
    <property type="match status" value="1"/>
</dbReference>
<dbReference type="Gene3D" id="3.30.860.10">
    <property type="entry name" value="30s Ribosomal Protein S19, Chain A"/>
    <property type="match status" value="1"/>
</dbReference>
<dbReference type="HAMAP" id="MF_00531">
    <property type="entry name" value="Ribosomal_uS19"/>
    <property type="match status" value="1"/>
</dbReference>
<dbReference type="InterPro" id="IPR002222">
    <property type="entry name" value="Ribosomal_uS19"/>
</dbReference>
<dbReference type="InterPro" id="IPR005732">
    <property type="entry name" value="Ribosomal_uS19_bac-type"/>
</dbReference>
<dbReference type="InterPro" id="IPR020934">
    <property type="entry name" value="Ribosomal_uS19_CS"/>
</dbReference>
<dbReference type="InterPro" id="IPR023575">
    <property type="entry name" value="Ribosomal_uS19_SF"/>
</dbReference>
<dbReference type="NCBIfam" id="TIGR01050">
    <property type="entry name" value="rpsS_bact"/>
    <property type="match status" value="1"/>
</dbReference>
<dbReference type="PANTHER" id="PTHR11880">
    <property type="entry name" value="RIBOSOMAL PROTEIN S19P FAMILY MEMBER"/>
    <property type="match status" value="1"/>
</dbReference>
<dbReference type="PANTHER" id="PTHR11880:SF8">
    <property type="entry name" value="SMALL RIBOSOMAL SUBUNIT PROTEIN US19M"/>
    <property type="match status" value="1"/>
</dbReference>
<dbReference type="Pfam" id="PF00203">
    <property type="entry name" value="Ribosomal_S19"/>
    <property type="match status" value="1"/>
</dbReference>
<dbReference type="PIRSF" id="PIRSF002144">
    <property type="entry name" value="Ribosomal_S19"/>
    <property type="match status" value="1"/>
</dbReference>
<dbReference type="PRINTS" id="PR00975">
    <property type="entry name" value="RIBOSOMALS19"/>
</dbReference>
<dbReference type="SUPFAM" id="SSF54570">
    <property type="entry name" value="Ribosomal protein S19"/>
    <property type="match status" value="1"/>
</dbReference>
<dbReference type="PROSITE" id="PS00323">
    <property type="entry name" value="RIBOSOMAL_S19"/>
    <property type="match status" value="1"/>
</dbReference>
<feature type="chain" id="PRO_1000211806" description="Small ribosomal subunit protein uS19">
    <location>
        <begin position="1"/>
        <end position="91"/>
    </location>
</feature>
<name>RS19_EXISA</name>
<organism>
    <name type="scientific">Exiguobacterium sp. (strain ATCC BAA-1283 / AT1b)</name>
    <dbReference type="NCBI Taxonomy" id="360911"/>
    <lineage>
        <taxon>Bacteria</taxon>
        <taxon>Bacillati</taxon>
        <taxon>Bacillota</taxon>
        <taxon>Bacilli</taxon>
        <taxon>Bacillales</taxon>
        <taxon>Bacillales Family XII. Incertae Sedis</taxon>
        <taxon>Exiguobacterium</taxon>
    </lineage>
</organism>
<accession>C4KZP2</accession>
<gene>
    <name evidence="1" type="primary">rpsS</name>
    <name type="ordered locus">EAT1b_1629</name>
</gene>
<sequence length="91" mass="10344">MGRSLKKGPFADHHLLAKVDKLNESGEKQVIKTWSRRSTIFPEFMGHTFGVHDGRKHVPVFVTEDMVGHKLGEFAPTRTYKGHGSDKKTKR</sequence>
<keyword id="KW-0687">Ribonucleoprotein</keyword>
<keyword id="KW-0689">Ribosomal protein</keyword>
<keyword id="KW-0694">RNA-binding</keyword>
<keyword id="KW-0699">rRNA-binding</keyword>
<proteinExistence type="inferred from homology"/>
<evidence type="ECO:0000255" key="1">
    <source>
        <dbReference type="HAMAP-Rule" id="MF_00531"/>
    </source>
</evidence>
<evidence type="ECO:0000305" key="2"/>
<reference key="1">
    <citation type="journal article" date="2011" name="J. Bacteriol.">
        <title>Complete genome sequence of the Thermophilic Bacterium Exiguobacterium sp. AT1b.</title>
        <authorList>
            <person name="Vishnivetskaya T.A."/>
            <person name="Lucas S."/>
            <person name="Copeland A."/>
            <person name="Lapidus A."/>
            <person name="Glavina del Rio T."/>
            <person name="Dalin E."/>
            <person name="Tice H."/>
            <person name="Bruce D.C."/>
            <person name="Goodwin L.A."/>
            <person name="Pitluck S."/>
            <person name="Saunders E."/>
            <person name="Brettin T."/>
            <person name="Detter C."/>
            <person name="Han C."/>
            <person name="Larimer F."/>
            <person name="Land M.L."/>
            <person name="Hauser L.J."/>
            <person name="Kyrpides N.C."/>
            <person name="Ovchinnikova G."/>
            <person name="Kathariou S."/>
            <person name="Ramaley R.F."/>
            <person name="Rodrigues D.F."/>
            <person name="Hendrix C."/>
            <person name="Richardson P."/>
            <person name="Tiedje J.M."/>
        </authorList>
    </citation>
    <scope>NUCLEOTIDE SEQUENCE [LARGE SCALE GENOMIC DNA]</scope>
    <source>
        <strain>ATCC BAA-1283 / AT1b</strain>
    </source>
</reference>
<protein>
    <recommendedName>
        <fullName evidence="1">Small ribosomal subunit protein uS19</fullName>
    </recommendedName>
    <alternativeName>
        <fullName evidence="2">30S ribosomal protein S19</fullName>
    </alternativeName>
</protein>